<name>FLA_ACTMZ</name>
<accession>A0A1G9FQX8</accession>
<comment type="function">
    <text evidence="2">Catalyzes the formation of a C-F bond by combining S-adenosyl-L-methionine (SAM) and fluoride to generate 5'-fluoro-5'-deoxyadenosine (5'-FDA) and L-methionine.</text>
</comment>
<comment type="catalytic activity">
    <reaction evidence="2">
        <text>fluoride + S-adenosyl-L-methionine = 5'-deoxy-5'-fluoroadenosine + L-methionine</text>
        <dbReference type="Rhea" id="RHEA:16661"/>
        <dbReference type="ChEBI" id="CHEBI:12060"/>
        <dbReference type="ChEBI" id="CHEBI:17051"/>
        <dbReference type="ChEBI" id="CHEBI:57844"/>
        <dbReference type="ChEBI" id="CHEBI:59789"/>
        <dbReference type="EC" id="2.5.1.63"/>
    </reaction>
</comment>
<comment type="activity regulation">
    <text evidence="2">Activity is not severely affected by most metal ions (Mg(2+), Mn(2+), Co(2+) and Fe(2+)), but both Cu(2+) and Zn(2+) are strong inhibitors.</text>
</comment>
<comment type="biophysicochemical properties">
    <phDependence>
        <text evidence="2">Optimum pH is 7.2.</text>
    </phDependence>
    <temperatureDependence>
        <text evidence="2">Optimum temperature is 65 degrees Celsius (PubMed:31589919). Exhibits excellent thermostability, suggesting that this enzyme is a promising candidate for biocatalytic applications (PubMed:31589919).</text>
    </temperatureDependence>
</comment>
<comment type="similarity">
    <text evidence="4">Belongs to the SAM hydrolase / SAM-dependent halogenase family.</text>
</comment>
<proteinExistence type="evidence at protein level"/>
<dbReference type="EC" id="2.5.1.63" evidence="2"/>
<dbReference type="EMBL" id="FNFM01000017">
    <property type="protein sequence ID" value="SDK90789.1"/>
    <property type="molecule type" value="Genomic_DNA"/>
</dbReference>
<dbReference type="RefSeq" id="WP_218120322.1">
    <property type="nucleotide sequence ID" value="NZ_FNFM01000017.1"/>
</dbReference>
<dbReference type="SMR" id="A0A1G9FQX8"/>
<dbReference type="BRENDA" id="2.5.1.63">
    <property type="organism ID" value="17655"/>
</dbReference>
<dbReference type="Proteomes" id="UP000199213">
    <property type="component" value="Unassembled WGS sequence"/>
</dbReference>
<dbReference type="GO" id="GO:0033846">
    <property type="term" value="F:adenosyl-fluoride synthase activity"/>
    <property type="evidence" value="ECO:0007669"/>
    <property type="project" value="InterPro"/>
</dbReference>
<dbReference type="Gene3D" id="2.40.30.90">
    <property type="entry name" value="Bacterial fluorinating enzyme like"/>
    <property type="match status" value="1"/>
</dbReference>
<dbReference type="Gene3D" id="3.40.50.10790">
    <property type="entry name" value="S-adenosyl-l-methionine hydroxide adenosyltransferase, N-terminal"/>
    <property type="match status" value="1"/>
</dbReference>
<dbReference type="InterPro" id="IPR030978">
    <property type="entry name" value="Fluorinase"/>
</dbReference>
<dbReference type="InterPro" id="IPR046470">
    <property type="entry name" value="SAM_HAT_C"/>
</dbReference>
<dbReference type="InterPro" id="IPR046469">
    <property type="entry name" value="SAM_HAT_N"/>
</dbReference>
<dbReference type="InterPro" id="IPR002747">
    <property type="entry name" value="SAM_OH_AdoTrfase"/>
</dbReference>
<dbReference type="InterPro" id="IPR023227">
    <property type="entry name" value="SAM_OH_AdoTrfase_C_sf"/>
</dbReference>
<dbReference type="InterPro" id="IPR023228">
    <property type="entry name" value="SAM_OH_AdoTrfase_N_sf"/>
</dbReference>
<dbReference type="NCBIfam" id="TIGR04507">
    <property type="entry name" value="fluorinase"/>
    <property type="match status" value="1"/>
</dbReference>
<dbReference type="PANTHER" id="PTHR35092">
    <property type="entry name" value="CHLORINASE MJ1651"/>
    <property type="match status" value="1"/>
</dbReference>
<dbReference type="PANTHER" id="PTHR35092:SF1">
    <property type="entry name" value="CHLORINASE MJ1651"/>
    <property type="match status" value="1"/>
</dbReference>
<dbReference type="Pfam" id="PF20257">
    <property type="entry name" value="SAM_HAT_C"/>
    <property type="match status" value="1"/>
</dbReference>
<dbReference type="Pfam" id="PF01887">
    <property type="entry name" value="SAM_HAT_N"/>
    <property type="match status" value="2"/>
</dbReference>
<dbReference type="PIRSF" id="PIRSF006779">
    <property type="entry name" value="UCP006779"/>
    <property type="match status" value="1"/>
</dbReference>
<dbReference type="SUPFAM" id="SSF101852">
    <property type="entry name" value="Bacterial fluorinating enzyme, C-terminal domain"/>
    <property type="match status" value="1"/>
</dbReference>
<dbReference type="SUPFAM" id="SSF102522">
    <property type="entry name" value="Bacterial fluorinating enzyme, N-terminal domain"/>
    <property type="match status" value="1"/>
</dbReference>
<organism>
    <name type="scientific">Actinopolyspora mzabensis</name>
    <dbReference type="NCBI Taxonomy" id="995066"/>
    <lineage>
        <taxon>Bacteria</taxon>
        <taxon>Bacillati</taxon>
        <taxon>Actinomycetota</taxon>
        <taxon>Actinomycetes</taxon>
        <taxon>Actinopolysporales</taxon>
        <taxon>Actinopolysporaceae</taxon>
        <taxon>Actinopolyspora</taxon>
    </lineage>
</organism>
<protein>
    <recommendedName>
        <fullName evidence="3">Fluorinase</fullName>
        <ecNumber evidence="2">2.5.1.63</ecNumber>
    </recommendedName>
</protein>
<sequence length="299" mass="32398">MSDSYSRPIIAFMSDLGTTDDSVAQCKGLMMSICQDVTVVDVCHSMEPWNVEEGARYIVDLPRFFPEGTVFATTTYPATGTTARSVAVRIKYPAKGGARGQWAGSGEGFERSEGSYIYIAPNNGLLTTVLQEHGYTEAYEVSSTDVVPARPEPTFYSREMVAIPSAHLAAGYPLEKVGRKLQDSEIVRFTPPQATVSPEGDLSGVVTAIDHPFGNIWTSIHRDNLESAGVGYGTNLKIVLDDVFPFELPLSPTFADAGEVGDPVVYVNSRGYLSLARNAASLAYPYNLKEGMSVRVTRS</sequence>
<feature type="chain" id="PRO_0000458472" description="Fluorinase">
    <location>
        <begin position="1"/>
        <end position="299"/>
    </location>
</feature>
<feature type="binding site" evidence="1">
    <location>
        <position position="15"/>
    </location>
    <ligand>
        <name>S-adenosyl-L-methionine</name>
        <dbReference type="ChEBI" id="CHEBI:59789"/>
    </ligand>
</feature>
<feature type="binding site" evidence="1">
    <location>
        <begin position="20"/>
        <end position="22"/>
    </location>
    <ligand>
        <name>S-adenosyl-L-methionine</name>
        <dbReference type="ChEBI" id="CHEBI:59789"/>
    </ligand>
</feature>
<feature type="binding site" evidence="1">
    <location>
        <position position="76"/>
    </location>
    <ligand>
        <name>S-adenosyl-L-methionine</name>
        <dbReference type="ChEBI" id="CHEBI:59789"/>
    </ligand>
</feature>
<feature type="binding site" evidence="1">
    <location>
        <position position="157"/>
    </location>
    <ligand>
        <name>S-adenosyl-L-methionine</name>
        <dbReference type="ChEBI" id="CHEBI:59789"/>
    </ligand>
</feature>
<feature type="binding site" evidence="1">
    <location>
        <position position="210"/>
    </location>
    <ligand>
        <name>S-adenosyl-L-methionine</name>
        <dbReference type="ChEBI" id="CHEBI:59789"/>
    </ligand>
</feature>
<feature type="binding site" evidence="1">
    <location>
        <position position="215"/>
    </location>
    <ligand>
        <name>S-adenosyl-L-methionine</name>
        <dbReference type="ChEBI" id="CHEBI:59789"/>
    </ligand>
</feature>
<feature type="binding site" evidence="1">
    <location>
        <begin position="269"/>
        <end position="270"/>
    </location>
    <ligand>
        <name>S-adenosyl-L-methionine</name>
        <dbReference type="ChEBI" id="CHEBI:59789"/>
    </ligand>
</feature>
<feature type="binding site" evidence="1">
    <location>
        <begin position="277"/>
        <end position="279"/>
    </location>
    <ligand>
        <name>S-adenosyl-L-methionine</name>
        <dbReference type="ChEBI" id="CHEBI:59789"/>
    </ligand>
</feature>
<keyword id="KW-1185">Reference proteome</keyword>
<keyword id="KW-0949">S-adenosyl-L-methionine</keyword>
<keyword id="KW-0808">Transferase</keyword>
<reference key="1">
    <citation type="submission" date="2016-10" db="EMBL/GenBank/DDBJ databases">
        <authorList>
            <person name="Varghese N."/>
        </authorList>
    </citation>
    <scope>NUCLEOTIDE SEQUENCE [LARGE SCALE GENOMIC DNA]</scope>
    <source>
        <strain>DSM 45460 / CCUG 62965 / H55</strain>
    </source>
</reference>
<reference key="2">
    <citation type="journal article" date="2020" name="Protein Expr. Purif.">
        <title>Identification and characterisation of a fluorinase from Actinopolyspora mzabensis.</title>
        <authorList>
            <person name="Sooklal S.A."/>
            <person name="De Koning C."/>
            <person name="Brady D."/>
            <person name="Rumbold K."/>
        </authorList>
    </citation>
    <scope>FUNCTION</scope>
    <scope>CATALYTIC ACTIVITY</scope>
    <scope>ACTIVITY REGULATION</scope>
    <scope>BIOPHYSICOCHEMICAL PROPERTIES</scope>
</reference>
<gene>
    <name evidence="5" type="ORF">SAMN04487820_1174</name>
</gene>
<evidence type="ECO:0000250" key="1">
    <source>
        <dbReference type="UniProtKB" id="Q70GK9"/>
    </source>
</evidence>
<evidence type="ECO:0000269" key="2">
    <source>
    </source>
</evidence>
<evidence type="ECO:0000303" key="3">
    <source>
    </source>
</evidence>
<evidence type="ECO:0000305" key="4"/>
<evidence type="ECO:0000312" key="5">
    <source>
        <dbReference type="EMBL" id="SDK90789.1"/>
    </source>
</evidence>